<feature type="chain" id="PRO_0000170589" description="Guanylate kinase">
    <location>
        <begin position="1"/>
        <end position="214"/>
    </location>
</feature>
<feature type="domain" description="Guanylate kinase-like" evidence="1">
    <location>
        <begin position="6"/>
        <end position="192"/>
    </location>
</feature>
<feature type="binding site" evidence="1">
    <location>
        <begin position="13"/>
        <end position="20"/>
    </location>
    <ligand>
        <name>ATP</name>
        <dbReference type="ChEBI" id="CHEBI:30616"/>
    </ligand>
</feature>
<proteinExistence type="inferred from homology"/>
<protein>
    <recommendedName>
        <fullName evidence="1">Guanylate kinase</fullName>
        <ecNumber evidence="1">2.7.4.8</ecNumber>
    </recommendedName>
    <alternativeName>
        <fullName evidence="1">GMP kinase</fullName>
    </alternativeName>
</protein>
<keyword id="KW-0067">ATP-binding</keyword>
<keyword id="KW-0963">Cytoplasm</keyword>
<keyword id="KW-0418">Kinase</keyword>
<keyword id="KW-0547">Nucleotide-binding</keyword>
<keyword id="KW-1185">Reference proteome</keyword>
<keyword id="KW-0808">Transferase</keyword>
<dbReference type="EC" id="2.7.4.8" evidence="1"/>
<dbReference type="EMBL" id="AE016853">
    <property type="protein sequence ID" value="AAO53629.1"/>
    <property type="molecule type" value="Genomic_DNA"/>
</dbReference>
<dbReference type="RefSeq" id="NP_789934.1">
    <property type="nucleotide sequence ID" value="NC_004578.1"/>
</dbReference>
<dbReference type="RefSeq" id="WP_003377979.1">
    <property type="nucleotide sequence ID" value="NC_004578.1"/>
</dbReference>
<dbReference type="SMR" id="Q88BE2"/>
<dbReference type="STRING" id="223283.PSPTO_0075"/>
<dbReference type="GeneID" id="1181683"/>
<dbReference type="KEGG" id="pst:PSPTO_0075"/>
<dbReference type="PATRIC" id="fig|223283.9.peg.78"/>
<dbReference type="eggNOG" id="COG0194">
    <property type="taxonomic scope" value="Bacteria"/>
</dbReference>
<dbReference type="HOGENOM" id="CLU_001715_1_0_6"/>
<dbReference type="OrthoDB" id="9808150at2"/>
<dbReference type="PhylomeDB" id="Q88BE2"/>
<dbReference type="Proteomes" id="UP000002515">
    <property type="component" value="Chromosome"/>
</dbReference>
<dbReference type="GO" id="GO:0005829">
    <property type="term" value="C:cytosol"/>
    <property type="evidence" value="ECO:0007669"/>
    <property type="project" value="TreeGrafter"/>
</dbReference>
<dbReference type="GO" id="GO:0005524">
    <property type="term" value="F:ATP binding"/>
    <property type="evidence" value="ECO:0007669"/>
    <property type="project" value="UniProtKB-UniRule"/>
</dbReference>
<dbReference type="GO" id="GO:0004385">
    <property type="term" value="F:guanylate kinase activity"/>
    <property type="evidence" value="ECO:0007669"/>
    <property type="project" value="UniProtKB-UniRule"/>
</dbReference>
<dbReference type="CDD" id="cd00071">
    <property type="entry name" value="GMPK"/>
    <property type="match status" value="1"/>
</dbReference>
<dbReference type="FunFam" id="3.40.50.300:FF:000855">
    <property type="entry name" value="Guanylate kinase"/>
    <property type="match status" value="1"/>
</dbReference>
<dbReference type="FunFam" id="3.30.63.10:FF:000002">
    <property type="entry name" value="Guanylate kinase 1"/>
    <property type="match status" value="1"/>
</dbReference>
<dbReference type="Gene3D" id="3.30.63.10">
    <property type="entry name" value="Guanylate Kinase phosphate binding domain"/>
    <property type="match status" value="1"/>
</dbReference>
<dbReference type="Gene3D" id="3.40.50.300">
    <property type="entry name" value="P-loop containing nucleotide triphosphate hydrolases"/>
    <property type="match status" value="1"/>
</dbReference>
<dbReference type="HAMAP" id="MF_00328">
    <property type="entry name" value="Guanylate_kinase"/>
    <property type="match status" value="1"/>
</dbReference>
<dbReference type="InterPro" id="IPR008145">
    <property type="entry name" value="GK/Ca_channel_bsu"/>
</dbReference>
<dbReference type="InterPro" id="IPR008144">
    <property type="entry name" value="Guanylate_kin-like_dom"/>
</dbReference>
<dbReference type="InterPro" id="IPR017665">
    <property type="entry name" value="Guanylate_kinase"/>
</dbReference>
<dbReference type="InterPro" id="IPR020590">
    <property type="entry name" value="Guanylate_kinase_CS"/>
</dbReference>
<dbReference type="InterPro" id="IPR027417">
    <property type="entry name" value="P-loop_NTPase"/>
</dbReference>
<dbReference type="NCBIfam" id="TIGR03263">
    <property type="entry name" value="guanyl_kin"/>
    <property type="match status" value="1"/>
</dbReference>
<dbReference type="PANTHER" id="PTHR23117:SF13">
    <property type="entry name" value="GUANYLATE KINASE"/>
    <property type="match status" value="1"/>
</dbReference>
<dbReference type="PANTHER" id="PTHR23117">
    <property type="entry name" value="GUANYLATE KINASE-RELATED"/>
    <property type="match status" value="1"/>
</dbReference>
<dbReference type="Pfam" id="PF00625">
    <property type="entry name" value="Guanylate_kin"/>
    <property type="match status" value="1"/>
</dbReference>
<dbReference type="SMART" id="SM00072">
    <property type="entry name" value="GuKc"/>
    <property type="match status" value="1"/>
</dbReference>
<dbReference type="SUPFAM" id="SSF52540">
    <property type="entry name" value="P-loop containing nucleoside triphosphate hydrolases"/>
    <property type="match status" value="1"/>
</dbReference>
<dbReference type="PROSITE" id="PS00856">
    <property type="entry name" value="GUANYLATE_KINASE_1"/>
    <property type="match status" value="1"/>
</dbReference>
<dbReference type="PROSITE" id="PS50052">
    <property type="entry name" value="GUANYLATE_KINASE_2"/>
    <property type="match status" value="1"/>
</dbReference>
<sequence length="214" mass="24336">MTHITGTLYIISAPSGAGKTSLVKALMDAQQEPQHGAQAKIRVSVSHTTRAMRPGEVDGVNYNFVDRAEFVRMIEHGDFLEQAEVFGNLYGTSQSHLQQTLDEGHDLILEIDWQGARQVRTQMPQARSIFILPPSQQALRQRLTNRGQDSDEIIEARMREAVSEMSHYNEYEYVVVNDDFAGALEDLKSIFRANRLTQQHQQEQYSELFQELLA</sequence>
<evidence type="ECO:0000255" key="1">
    <source>
        <dbReference type="HAMAP-Rule" id="MF_00328"/>
    </source>
</evidence>
<gene>
    <name evidence="1" type="primary">gmk</name>
    <name type="ordered locus">PSPTO_0075</name>
</gene>
<comment type="function">
    <text evidence="1">Essential for recycling GMP and indirectly, cGMP.</text>
</comment>
<comment type="catalytic activity">
    <reaction evidence="1">
        <text>GMP + ATP = GDP + ADP</text>
        <dbReference type="Rhea" id="RHEA:20780"/>
        <dbReference type="ChEBI" id="CHEBI:30616"/>
        <dbReference type="ChEBI" id="CHEBI:58115"/>
        <dbReference type="ChEBI" id="CHEBI:58189"/>
        <dbReference type="ChEBI" id="CHEBI:456216"/>
        <dbReference type="EC" id="2.7.4.8"/>
    </reaction>
</comment>
<comment type="subcellular location">
    <subcellularLocation>
        <location evidence="1">Cytoplasm</location>
    </subcellularLocation>
</comment>
<comment type="similarity">
    <text evidence="1">Belongs to the guanylate kinase family.</text>
</comment>
<reference key="1">
    <citation type="journal article" date="2003" name="Proc. Natl. Acad. Sci. U.S.A.">
        <title>The complete genome sequence of the Arabidopsis and tomato pathogen Pseudomonas syringae pv. tomato DC3000.</title>
        <authorList>
            <person name="Buell C.R."/>
            <person name="Joardar V."/>
            <person name="Lindeberg M."/>
            <person name="Selengut J."/>
            <person name="Paulsen I.T."/>
            <person name="Gwinn M.L."/>
            <person name="Dodson R.J."/>
            <person name="DeBoy R.T."/>
            <person name="Durkin A.S."/>
            <person name="Kolonay J.F."/>
            <person name="Madupu R."/>
            <person name="Daugherty S.C."/>
            <person name="Brinkac L.M."/>
            <person name="Beanan M.J."/>
            <person name="Haft D.H."/>
            <person name="Nelson W.C."/>
            <person name="Davidsen T.M."/>
            <person name="Zafar N."/>
            <person name="Zhou L."/>
            <person name="Liu J."/>
            <person name="Yuan Q."/>
            <person name="Khouri H.M."/>
            <person name="Fedorova N.B."/>
            <person name="Tran B."/>
            <person name="Russell D."/>
            <person name="Berry K.J."/>
            <person name="Utterback T.R."/>
            <person name="Van Aken S.E."/>
            <person name="Feldblyum T.V."/>
            <person name="D'Ascenzo M."/>
            <person name="Deng W.-L."/>
            <person name="Ramos A.R."/>
            <person name="Alfano J.R."/>
            <person name="Cartinhour S."/>
            <person name="Chatterjee A.K."/>
            <person name="Delaney T.P."/>
            <person name="Lazarowitz S.G."/>
            <person name="Martin G.B."/>
            <person name="Schneider D.J."/>
            <person name="Tang X."/>
            <person name="Bender C.L."/>
            <person name="White O."/>
            <person name="Fraser C.M."/>
            <person name="Collmer A."/>
        </authorList>
    </citation>
    <scope>NUCLEOTIDE SEQUENCE [LARGE SCALE GENOMIC DNA]</scope>
    <source>
        <strain>ATCC BAA-871 / DC3000</strain>
    </source>
</reference>
<accession>Q88BE2</accession>
<name>KGUA_PSESM</name>
<organism>
    <name type="scientific">Pseudomonas syringae pv. tomato (strain ATCC BAA-871 / DC3000)</name>
    <dbReference type="NCBI Taxonomy" id="223283"/>
    <lineage>
        <taxon>Bacteria</taxon>
        <taxon>Pseudomonadati</taxon>
        <taxon>Pseudomonadota</taxon>
        <taxon>Gammaproteobacteria</taxon>
        <taxon>Pseudomonadales</taxon>
        <taxon>Pseudomonadaceae</taxon>
        <taxon>Pseudomonas</taxon>
    </lineage>
</organism>